<evidence type="ECO:0000250" key="1"/>
<evidence type="ECO:0000250" key="2">
    <source>
        <dbReference type="UniProtKB" id="O29998"/>
    </source>
</evidence>
<evidence type="ECO:0000250" key="3">
    <source>
        <dbReference type="UniProtKB" id="P28634"/>
    </source>
</evidence>
<evidence type="ECO:0000255" key="4">
    <source>
        <dbReference type="PROSITE-ProRule" id="PRU01003"/>
    </source>
</evidence>
<evidence type="ECO:0000305" key="5"/>
<dbReference type="EC" id="2.1.1.-" evidence="3"/>
<dbReference type="EMBL" id="Z12609">
    <property type="status" value="NOT_ANNOTATED_CDS"/>
    <property type="molecule type" value="Genomic_DNA"/>
</dbReference>
<dbReference type="SMR" id="P37752"/>
<dbReference type="GO" id="GO:0089715">
    <property type="term" value="F:tRNA (L-threonylcarbamoyladenosine(37)-C2) methyltransferase activity"/>
    <property type="evidence" value="ECO:0000250"/>
    <property type="project" value="UniProtKB"/>
</dbReference>
<dbReference type="GO" id="GO:0000049">
    <property type="term" value="F:tRNA binding"/>
    <property type="evidence" value="ECO:0000250"/>
    <property type="project" value="UniProtKB"/>
</dbReference>
<dbReference type="GO" id="GO:0030488">
    <property type="term" value="P:tRNA methylation"/>
    <property type="evidence" value="ECO:0000250"/>
    <property type="project" value="UniProtKB"/>
</dbReference>
<dbReference type="CDD" id="cd09281">
    <property type="entry name" value="UPF0066"/>
    <property type="match status" value="1"/>
</dbReference>
<dbReference type="Gene3D" id="2.40.30.70">
    <property type="entry name" value="YaeB-like"/>
    <property type="match status" value="1"/>
</dbReference>
<dbReference type="Gene3D" id="3.30.2310.10">
    <property type="entry name" value="YaeB-like"/>
    <property type="match status" value="1"/>
</dbReference>
<dbReference type="InterPro" id="IPR023370">
    <property type="entry name" value="TrmO-like_N"/>
</dbReference>
<dbReference type="InterPro" id="IPR041369">
    <property type="entry name" value="TrmO_C"/>
</dbReference>
<dbReference type="InterPro" id="IPR023368">
    <property type="entry name" value="UPF0066_cons_site"/>
</dbReference>
<dbReference type="InterPro" id="IPR040372">
    <property type="entry name" value="YaeB-like"/>
</dbReference>
<dbReference type="InterPro" id="IPR036413">
    <property type="entry name" value="YaeB-like_sf"/>
</dbReference>
<dbReference type="InterPro" id="IPR036414">
    <property type="entry name" value="YaeB_N_sf"/>
</dbReference>
<dbReference type="NCBIfam" id="TIGR00104">
    <property type="entry name" value="tRNA_TsaA"/>
    <property type="match status" value="1"/>
</dbReference>
<dbReference type="PANTHER" id="PTHR12818">
    <property type="entry name" value="TRNA (ADENINE(37)-N6)-METHYLTRANSFERASE"/>
    <property type="match status" value="1"/>
</dbReference>
<dbReference type="PANTHER" id="PTHR12818:SF0">
    <property type="entry name" value="TRNA (ADENINE(37)-N6)-METHYLTRANSFERASE"/>
    <property type="match status" value="1"/>
</dbReference>
<dbReference type="Pfam" id="PF18389">
    <property type="entry name" value="TrmO_C"/>
    <property type="match status" value="1"/>
</dbReference>
<dbReference type="Pfam" id="PF01980">
    <property type="entry name" value="TrmO_N"/>
    <property type="match status" value="1"/>
</dbReference>
<dbReference type="SUPFAM" id="SSF118196">
    <property type="entry name" value="YaeB-like"/>
    <property type="match status" value="1"/>
</dbReference>
<dbReference type="PROSITE" id="PS01318">
    <property type="entry name" value="TSAA_1"/>
    <property type="match status" value="1"/>
</dbReference>
<dbReference type="PROSITE" id="PS51668">
    <property type="entry name" value="TSAA_2"/>
    <property type="match status" value="1"/>
</dbReference>
<sequence>SFSHIWVQFVFHGVAGAGWQPLVRPPRLGGNRKMGVFATRSPFRPNPLGLSLLKLERIETEGGVRLWCGGADLLDGTPVLDIKPYLPFVEAQPDAAPGFAAVPPVPLEVAWADEISAASLPPPNRLLIEQSIAQDPRPAYQDTPQRVYKMAVDDWEVAFRIEKGMALIEAVMAVEG</sequence>
<protein>
    <recommendedName>
        <fullName evidence="5">tRNA (adenine(37)-N6)-methyltransferase</fullName>
        <ecNumber evidence="3">2.1.1.-</ecNumber>
    </recommendedName>
    <alternativeName>
        <fullName>S-adenosylmethionine-dependent methyltransferase</fullName>
    </alternativeName>
    <alternativeName>
        <fullName evidence="3">tRNA methyltransferase O</fullName>
    </alternativeName>
</protein>
<accession>P37752</accession>
<keyword id="KW-0489">Methyltransferase</keyword>
<keyword id="KW-0694">RNA-binding</keyword>
<keyword id="KW-0949">S-adenosyl-L-methionine</keyword>
<keyword id="KW-0808">Transferase</keyword>
<keyword id="KW-0819">tRNA processing</keyword>
<gene>
    <name evidence="3" type="primary">trmO</name>
</gene>
<name>TRMO_EIKCO</name>
<organism>
    <name type="scientific">Eikenella corrodens</name>
    <dbReference type="NCBI Taxonomy" id="539"/>
    <lineage>
        <taxon>Bacteria</taxon>
        <taxon>Pseudomonadati</taxon>
        <taxon>Pseudomonadota</taxon>
        <taxon>Betaproteobacteria</taxon>
        <taxon>Neisseriales</taxon>
        <taxon>Neisseriaceae</taxon>
        <taxon>Eikenella</taxon>
    </lineage>
</organism>
<reference key="1">
    <citation type="journal article" date="1993" name="J. Gen. Microbiol.">
        <title>Cloning and sequencing of two type 4 (N-methylphenylalanine) pilin genes from Eikenella corrodens.</title>
        <authorList>
            <person name="Rao V.K."/>
            <person name="Progulske-Fox A."/>
        </authorList>
    </citation>
    <scope>NUCLEOTIDE SEQUENCE [GENOMIC DNA]</scope>
    <source>
        <strain>ATCC 23834 / DSM 8340 / JCM 12952 / KCTC 15198 / LMG 15557 / NCTC 10596 / 333/54-55</strain>
    </source>
</reference>
<reference key="2">
    <citation type="unpublished observations" date="1994-04">
        <authorList>
            <person name="Rudd K.E."/>
            <person name="Koonin E.V."/>
        </authorList>
    </citation>
    <scope>IDENTIFICATION</scope>
</reference>
<proteinExistence type="inferred from homology"/>
<comment type="function">
    <text evidence="3">S-adenosyl-L-methionine-dependent methyltransferase responsible for the addition of the methyl group in the formation of N6-methyl-N6-threonylcarbamoyladenosine at position 37 (m(6)t(6)A37) of the tRNA anticodon loop of tRNA(Thr)(GGU). The methyl group of m(6)t(6)A37 appears to slightly improve the efficiency of the tRNA decoding ability. Binds to tRNA.</text>
</comment>
<comment type="catalytic activity">
    <reaction evidence="3">
        <text>N(6)-L-threonylcarbamoyladenosine(37) in tRNA + S-adenosyl-L-methionine = N(6)-methyl,N(6)-L-threonylcarbamoyladenosine(37) in tRNA + S-adenosyl-L-homocysteine + H(+)</text>
        <dbReference type="Rhea" id="RHEA:70027"/>
        <dbReference type="Rhea" id="RHEA-COMP:10163"/>
        <dbReference type="Rhea" id="RHEA-COMP:17808"/>
        <dbReference type="ChEBI" id="CHEBI:15378"/>
        <dbReference type="ChEBI" id="CHEBI:57856"/>
        <dbReference type="ChEBI" id="CHEBI:59789"/>
        <dbReference type="ChEBI" id="CHEBI:74418"/>
        <dbReference type="ChEBI" id="CHEBI:188470"/>
    </reaction>
    <physiologicalReaction direction="left-to-right" evidence="3">
        <dbReference type="Rhea" id="RHEA:70028"/>
    </physiologicalReaction>
</comment>
<comment type="similarity">
    <text evidence="5">Belongs to the tRNA methyltransferase O family.</text>
</comment>
<feature type="chain" id="PRO_0000155618" description="tRNA (adenine(37)-N6)-methyltransferase">
    <location>
        <begin position="1" status="less than"/>
        <end position="176"/>
    </location>
</feature>
<feature type="domain" description="TsaA-like" evidence="4">
    <location>
        <begin position="1"/>
        <end position="94"/>
    </location>
</feature>
<feature type="binding site" evidence="2">
    <location>
        <begin position="12"/>
        <end position="13"/>
    </location>
    <ligand>
        <name>S-adenosyl-L-methionine</name>
        <dbReference type="ChEBI" id="CHEBI:59789"/>
    </ligand>
</feature>
<feature type="binding site" evidence="1">
    <location>
        <position position="12"/>
    </location>
    <ligand>
        <name>S-adenosyl-L-methionine</name>
        <dbReference type="ChEBI" id="CHEBI:59789"/>
    </ligand>
</feature>
<feature type="binding site" evidence="2">
    <location>
        <position position="40"/>
    </location>
    <ligand>
        <name>S-adenosyl-L-methionine</name>
        <dbReference type="ChEBI" id="CHEBI:59789"/>
    </ligand>
</feature>
<feature type="binding site" evidence="2">
    <location>
        <position position="50"/>
    </location>
    <ligand>
        <name>S-adenosyl-L-methionine</name>
        <dbReference type="ChEBI" id="CHEBI:59789"/>
    </ligand>
</feature>
<feature type="binding site" evidence="2">
    <location>
        <begin position="74"/>
        <end position="77"/>
    </location>
    <ligand>
        <name>S-adenosyl-L-methionine</name>
        <dbReference type="ChEBI" id="CHEBI:59789"/>
    </ligand>
</feature>
<feature type="non-terminal residue">
    <location>
        <position position="1"/>
    </location>
</feature>